<dbReference type="EMBL" id="CH902617">
    <property type="protein sequence ID" value="EDV44201.1"/>
    <property type="molecule type" value="Genomic_DNA"/>
</dbReference>
<dbReference type="SMR" id="B3M011"/>
<dbReference type="FunCoup" id="B3M011">
    <property type="interactions" value="495"/>
</dbReference>
<dbReference type="STRING" id="7217.B3M011"/>
<dbReference type="EnsemblMetazoa" id="FBtr0123565">
    <property type="protein sequence ID" value="FBpp0122057"/>
    <property type="gene ID" value="FBgn0095879"/>
</dbReference>
<dbReference type="EnsemblMetazoa" id="XM_001955604.4">
    <property type="protein sequence ID" value="XP_001955640.1"/>
    <property type="gene ID" value="LOC6501630"/>
</dbReference>
<dbReference type="GeneID" id="6501630"/>
<dbReference type="KEGG" id="dan:6501630"/>
<dbReference type="CTD" id="42670"/>
<dbReference type="eggNOG" id="KOG0464">
    <property type="taxonomic scope" value="Eukaryota"/>
</dbReference>
<dbReference type="HOGENOM" id="CLU_002794_4_1_1"/>
<dbReference type="InParanoid" id="B3M011"/>
<dbReference type="OMA" id="GPQFTFP"/>
<dbReference type="OrthoDB" id="198619at2759"/>
<dbReference type="PhylomeDB" id="B3M011"/>
<dbReference type="Proteomes" id="UP000007801">
    <property type="component" value="Unassembled WGS sequence"/>
</dbReference>
<dbReference type="GO" id="GO:0005739">
    <property type="term" value="C:mitochondrion"/>
    <property type="evidence" value="ECO:0007669"/>
    <property type="project" value="UniProtKB-SubCell"/>
</dbReference>
<dbReference type="GO" id="GO:0005525">
    <property type="term" value="F:GTP binding"/>
    <property type="evidence" value="ECO:0007669"/>
    <property type="project" value="UniProtKB-UniRule"/>
</dbReference>
<dbReference type="GO" id="GO:0003924">
    <property type="term" value="F:GTPase activity"/>
    <property type="evidence" value="ECO:0000250"/>
    <property type="project" value="UniProtKB"/>
</dbReference>
<dbReference type="GO" id="GO:0032543">
    <property type="term" value="P:mitochondrial translation"/>
    <property type="evidence" value="ECO:0000250"/>
    <property type="project" value="UniProtKB"/>
</dbReference>
<dbReference type="GO" id="GO:0032790">
    <property type="term" value="P:ribosome disassembly"/>
    <property type="evidence" value="ECO:0000250"/>
    <property type="project" value="UniProtKB"/>
</dbReference>
<dbReference type="CDD" id="cd16262">
    <property type="entry name" value="EFG_III"/>
    <property type="match status" value="1"/>
</dbReference>
<dbReference type="CDD" id="cd03713">
    <property type="entry name" value="EFG_mtEFG_C"/>
    <property type="match status" value="1"/>
</dbReference>
<dbReference type="FunFam" id="3.30.70.240:FF:000001">
    <property type="entry name" value="Elongation factor G"/>
    <property type="match status" value="1"/>
</dbReference>
<dbReference type="FunFam" id="2.40.30.10:FF:000203">
    <property type="entry name" value="Ribosome-releasing factor 2, mitochondrial"/>
    <property type="match status" value="1"/>
</dbReference>
<dbReference type="FunFam" id="3.30.230.10:FF:000033">
    <property type="entry name" value="Ribosome-releasing factor 2, mitochondrial"/>
    <property type="match status" value="1"/>
</dbReference>
<dbReference type="FunFam" id="3.30.70.870:FF:000005">
    <property type="entry name" value="Ribosome-releasing factor 2, mitochondrial"/>
    <property type="match status" value="1"/>
</dbReference>
<dbReference type="FunFam" id="3.40.50.300:FF:000514">
    <property type="entry name" value="Ribosome-releasing factor 2, mitochondrial"/>
    <property type="match status" value="1"/>
</dbReference>
<dbReference type="Gene3D" id="3.30.230.10">
    <property type="match status" value="1"/>
</dbReference>
<dbReference type="Gene3D" id="3.30.70.240">
    <property type="match status" value="1"/>
</dbReference>
<dbReference type="Gene3D" id="3.30.70.870">
    <property type="entry name" value="Elongation Factor G (Translational Gtpase), domain 3"/>
    <property type="match status" value="1"/>
</dbReference>
<dbReference type="Gene3D" id="3.40.50.300">
    <property type="entry name" value="P-loop containing nucleotide triphosphate hydrolases"/>
    <property type="match status" value="1"/>
</dbReference>
<dbReference type="Gene3D" id="2.40.30.10">
    <property type="entry name" value="Translation factors"/>
    <property type="match status" value="1"/>
</dbReference>
<dbReference type="HAMAP" id="MF_03059">
    <property type="entry name" value="mEF_G_2"/>
    <property type="match status" value="1"/>
</dbReference>
<dbReference type="InterPro" id="IPR053905">
    <property type="entry name" value="EF-G-like_DII"/>
</dbReference>
<dbReference type="InterPro" id="IPR030851">
    <property type="entry name" value="EFG2"/>
</dbReference>
<dbReference type="InterPro" id="IPR041095">
    <property type="entry name" value="EFG_II"/>
</dbReference>
<dbReference type="InterPro" id="IPR009022">
    <property type="entry name" value="EFG_III"/>
</dbReference>
<dbReference type="InterPro" id="IPR035647">
    <property type="entry name" value="EFG_III/V"/>
</dbReference>
<dbReference type="InterPro" id="IPR035649">
    <property type="entry name" value="EFG_V"/>
</dbReference>
<dbReference type="InterPro" id="IPR000640">
    <property type="entry name" value="EFG_V-like"/>
</dbReference>
<dbReference type="InterPro" id="IPR031157">
    <property type="entry name" value="G_TR_CS"/>
</dbReference>
<dbReference type="InterPro" id="IPR027417">
    <property type="entry name" value="P-loop_NTPase"/>
</dbReference>
<dbReference type="InterPro" id="IPR020568">
    <property type="entry name" value="Ribosomal_Su5_D2-typ_SF"/>
</dbReference>
<dbReference type="InterPro" id="IPR014721">
    <property type="entry name" value="Ribsml_uS5_D2-typ_fold_subgr"/>
</dbReference>
<dbReference type="InterPro" id="IPR005225">
    <property type="entry name" value="Small_GTP-bd"/>
</dbReference>
<dbReference type="InterPro" id="IPR000795">
    <property type="entry name" value="T_Tr_GTP-bd_dom"/>
</dbReference>
<dbReference type="InterPro" id="IPR009000">
    <property type="entry name" value="Transl_B-barrel_sf"/>
</dbReference>
<dbReference type="NCBIfam" id="TIGR00231">
    <property type="entry name" value="small_GTP"/>
    <property type="match status" value="1"/>
</dbReference>
<dbReference type="PANTHER" id="PTHR43261:SF1">
    <property type="entry name" value="RIBOSOME-RELEASING FACTOR 2, MITOCHONDRIAL"/>
    <property type="match status" value="1"/>
</dbReference>
<dbReference type="PANTHER" id="PTHR43261">
    <property type="entry name" value="TRANSLATION ELONGATION FACTOR G-RELATED"/>
    <property type="match status" value="1"/>
</dbReference>
<dbReference type="Pfam" id="PF22042">
    <property type="entry name" value="EF-G_D2"/>
    <property type="match status" value="1"/>
</dbReference>
<dbReference type="Pfam" id="PF00679">
    <property type="entry name" value="EFG_C"/>
    <property type="match status" value="1"/>
</dbReference>
<dbReference type="Pfam" id="PF14492">
    <property type="entry name" value="EFG_III"/>
    <property type="match status" value="1"/>
</dbReference>
<dbReference type="Pfam" id="PF00009">
    <property type="entry name" value="GTP_EFTU"/>
    <property type="match status" value="1"/>
</dbReference>
<dbReference type="PRINTS" id="PR00315">
    <property type="entry name" value="ELONGATNFCT"/>
</dbReference>
<dbReference type="SMART" id="SM00838">
    <property type="entry name" value="EFG_C"/>
    <property type="match status" value="1"/>
</dbReference>
<dbReference type="SUPFAM" id="SSF54980">
    <property type="entry name" value="EF-G C-terminal domain-like"/>
    <property type="match status" value="2"/>
</dbReference>
<dbReference type="SUPFAM" id="SSF52540">
    <property type="entry name" value="P-loop containing nucleoside triphosphate hydrolases"/>
    <property type="match status" value="1"/>
</dbReference>
<dbReference type="SUPFAM" id="SSF54211">
    <property type="entry name" value="Ribosomal protein S5 domain 2-like"/>
    <property type="match status" value="1"/>
</dbReference>
<dbReference type="SUPFAM" id="SSF50447">
    <property type="entry name" value="Translation proteins"/>
    <property type="match status" value="1"/>
</dbReference>
<dbReference type="PROSITE" id="PS00301">
    <property type="entry name" value="G_TR_1"/>
    <property type="match status" value="1"/>
</dbReference>
<dbReference type="PROSITE" id="PS51722">
    <property type="entry name" value="G_TR_2"/>
    <property type="match status" value="1"/>
</dbReference>
<keyword id="KW-0342">GTP-binding</keyword>
<keyword id="KW-0496">Mitochondrion</keyword>
<keyword id="KW-0547">Nucleotide-binding</keyword>
<keyword id="KW-0648">Protein biosynthesis</keyword>
<keyword id="KW-1185">Reference proteome</keyword>
<keyword id="KW-0809">Transit peptide</keyword>
<feature type="transit peptide" description="Mitochondrion" evidence="2">
    <location>
        <begin position="1"/>
        <end position="29"/>
    </location>
</feature>
<feature type="chain" id="PRO_0000385598" description="Ribosome-releasing factor 2, mitochondrial">
    <location>
        <begin position="30"/>
        <end position="741"/>
    </location>
</feature>
<feature type="domain" description="tr-type G">
    <location>
        <begin position="31"/>
        <end position="310"/>
    </location>
</feature>
<feature type="binding site" evidence="2">
    <location>
        <begin position="40"/>
        <end position="47"/>
    </location>
    <ligand>
        <name>GTP</name>
        <dbReference type="ChEBI" id="CHEBI:37565"/>
    </ligand>
</feature>
<feature type="binding site" evidence="2">
    <location>
        <begin position="104"/>
        <end position="108"/>
    </location>
    <ligand>
        <name>GTP</name>
        <dbReference type="ChEBI" id="CHEBI:37565"/>
    </ligand>
</feature>
<feature type="binding site" evidence="2">
    <location>
        <begin position="158"/>
        <end position="161"/>
    </location>
    <ligand>
        <name>GTP</name>
        <dbReference type="ChEBI" id="CHEBI:37565"/>
    </ligand>
</feature>
<reference key="1">
    <citation type="journal article" date="2007" name="Nature">
        <title>Evolution of genes and genomes on the Drosophila phylogeny.</title>
        <authorList>
            <consortium name="Drosophila 12 genomes consortium"/>
        </authorList>
    </citation>
    <scope>NUCLEOTIDE SEQUENCE [LARGE SCALE GENOMIC DNA]</scope>
    <source>
        <strain>Tucson 14024-0371.13</strain>
    </source>
</reference>
<gene>
    <name evidence="1" type="primary">mRRF2</name>
    <name evidence="1" type="synonym">EF-G2</name>
    <name type="ORF">GF18865</name>
</gene>
<comment type="function">
    <text evidence="2">Mitochondrial GTPase that mediates the disassembly of ribosomes from messenger RNA at the termination of mitochondrial protein biosynthesis. Not involved in the GTP-dependent ribosomal translocation step during translation elongation.</text>
</comment>
<comment type="subcellular location">
    <subcellularLocation>
        <location evidence="2">Mitochondrion</location>
    </subcellularLocation>
</comment>
<comment type="similarity">
    <text evidence="2">Belongs to the TRAFAC class translation factor GTPase superfamily. Classic translation factor GTPase family. EF-G/EF-2 subfamily.</text>
</comment>
<name>RRF2M_DROAN</name>
<accession>B3M011</accession>
<sequence length="741" mass="82094">MLKYEFLHGLQKRSHYLRQLSGQFFSRSYSSKIRNIGILAHIDAGKTTTTERMLFYAGKTRTLGEVHRGNTVTDYLTQERERGITICSSAVTFAWNGHRINLLDTPGHIDFTMEVEQSLYAVDGVVVVLDGTAGVEAQTVTVWTQADKHKLPRLIFVNKMDRPDADFEKCIADLKEKLEAHPVCLQYPVKNEDGVLAINDVITLERLTWQQKDLGQKYIRMKLEPSDELRDLQEKRNELIDRLSGVDDELADVVISTESFDKVDNHLIERALRRATGQLKVVPVLLGSAYKNVGIQRLMDAVNSYLPAPEERNQIYDCFGSEVAGKVFKIVHDKQRGALTLVRILRGEIKKGMRLISARGQAEVVSKLYEPLADEYREVNAVQSGDVVICAGLKSTVTGDLLTSSQSTLKNAQKRLKQSLGTTESVIPELDDESEESEDMFGLDPQIPDAVYFCSIEPPSISSQTAMEQALRQLQREDPSLRVSYDSVTGQTVLGGMGELHMDIIKSRILSEYKIDVDLGPLQIAYKETIESPALTTLSVEKEIAGAKQNVSITLELVKDKSEIFSLDKSPENMPNLNTLRPRILQVLKKGAIGALERGPRVGGQVVDTQIRLHNATIGRGTADSFVMATAAQCVQKVLSTSGTRLLEPIMSLQIVAPSERISGIMADLSRRRAQINDVLPKGERNKMILVNAPLAELSGYSSALRTISSGTASMTMQPCGFSAMNSVDESQAERRAQGLE</sequence>
<evidence type="ECO:0000250" key="1">
    <source>
        <dbReference type="UniProtKB" id="Q9VCX4"/>
    </source>
</evidence>
<evidence type="ECO:0000255" key="2">
    <source>
        <dbReference type="HAMAP-Rule" id="MF_03059"/>
    </source>
</evidence>
<organism>
    <name type="scientific">Drosophila ananassae</name>
    <name type="common">Fruit fly</name>
    <dbReference type="NCBI Taxonomy" id="7217"/>
    <lineage>
        <taxon>Eukaryota</taxon>
        <taxon>Metazoa</taxon>
        <taxon>Ecdysozoa</taxon>
        <taxon>Arthropoda</taxon>
        <taxon>Hexapoda</taxon>
        <taxon>Insecta</taxon>
        <taxon>Pterygota</taxon>
        <taxon>Neoptera</taxon>
        <taxon>Endopterygota</taxon>
        <taxon>Diptera</taxon>
        <taxon>Brachycera</taxon>
        <taxon>Muscomorpha</taxon>
        <taxon>Ephydroidea</taxon>
        <taxon>Drosophilidae</taxon>
        <taxon>Drosophila</taxon>
        <taxon>Sophophora</taxon>
    </lineage>
</organism>
<proteinExistence type="inferred from homology"/>
<protein>
    <recommendedName>
        <fullName evidence="2">Ribosome-releasing factor 2, mitochondrial</fullName>
        <shortName evidence="2">RRF2mt</shortName>
    </recommendedName>
    <alternativeName>
        <fullName evidence="2">Elongation factor G 2, mitochondrial</fullName>
        <shortName evidence="2">EF-G2mt</shortName>
        <shortName evidence="2">mEF-G 2</shortName>
    </alternativeName>
</protein>